<dbReference type="EMBL" id="CT010318">
    <property type="protein sequence ID" value="CAJ18526.1"/>
    <property type="molecule type" value="mRNA"/>
</dbReference>
<dbReference type="EMBL" id="AK146528">
    <property type="protein sequence ID" value="BAE27237.1"/>
    <property type="molecule type" value="mRNA"/>
</dbReference>
<dbReference type="EMBL" id="AK147169">
    <property type="protein sequence ID" value="BAE27733.1"/>
    <property type="molecule type" value="mRNA"/>
</dbReference>
<dbReference type="EMBL" id="AK159149">
    <property type="protein sequence ID" value="BAE34856.1"/>
    <property type="molecule type" value="mRNA"/>
</dbReference>
<dbReference type="EMBL" id="BC003843">
    <property type="protein sequence ID" value="AAH03843.1"/>
    <property type="molecule type" value="mRNA"/>
</dbReference>
<dbReference type="CCDS" id="CCDS27667.1"/>
<dbReference type="RefSeq" id="NP_001405578.1">
    <property type="nucleotide sequence ID" value="NM_001418649.1"/>
</dbReference>
<dbReference type="RefSeq" id="NP_598487.1">
    <property type="nucleotide sequence ID" value="NM_133726.3"/>
</dbReference>
<dbReference type="SMR" id="Q99L47"/>
<dbReference type="BioGRID" id="213997">
    <property type="interactions" value="18"/>
</dbReference>
<dbReference type="FunCoup" id="Q99L47">
    <property type="interactions" value="2526"/>
</dbReference>
<dbReference type="IntAct" id="Q99L47">
    <property type="interactions" value="3"/>
</dbReference>
<dbReference type="MINT" id="Q99L47"/>
<dbReference type="STRING" id="10090.ENSMUSP00000130195"/>
<dbReference type="GlyGen" id="Q99L47">
    <property type="glycosylation" value="1 site, 1 O-linked glycan (1 site)"/>
</dbReference>
<dbReference type="iPTMnet" id="Q99L47"/>
<dbReference type="MetOSite" id="Q99L47"/>
<dbReference type="PhosphoSitePlus" id="Q99L47"/>
<dbReference type="SwissPalm" id="Q99L47"/>
<dbReference type="REPRODUCTION-2DPAGE" id="Q99L47"/>
<dbReference type="jPOST" id="Q99L47"/>
<dbReference type="PaxDb" id="10090-ENSMUSP00000130195"/>
<dbReference type="PeptideAtlas" id="Q99L47"/>
<dbReference type="ProteomicsDB" id="275491"/>
<dbReference type="Pumba" id="Q99L47"/>
<dbReference type="Antibodypedia" id="3378">
    <property type="antibodies" value="391 antibodies from 34 providers"/>
</dbReference>
<dbReference type="DNASU" id="70356"/>
<dbReference type="Ensembl" id="ENSMUST00000172107.8">
    <property type="protein sequence ID" value="ENSMUSP00000130195.2"/>
    <property type="gene ID" value="ENSMUSG00000022403.16"/>
</dbReference>
<dbReference type="GeneID" id="70356"/>
<dbReference type="KEGG" id="mmu:70356"/>
<dbReference type="UCSC" id="uc007wwl.1">
    <property type="organism name" value="mouse"/>
</dbReference>
<dbReference type="AGR" id="MGI:1917606"/>
<dbReference type="CTD" id="6767"/>
<dbReference type="MGI" id="MGI:1917606">
    <property type="gene designation" value="St13"/>
</dbReference>
<dbReference type="VEuPathDB" id="HostDB:ENSMUSG00000022403"/>
<dbReference type="eggNOG" id="KOG1308">
    <property type="taxonomic scope" value="Eukaryota"/>
</dbReference>
<dbReference type="GeneTree" id="ENSGT00390000001347"/>
<dbReference type="InParanoid" id="Q99L47"/>
<dbReference type="OMA" id="YEKRRYK"/>
<dbReference type="OrthoDB" id="533763at2759"/>
<dbReference type="PhylomeDB" id="Q99L47"/>
<dbReference type="TreeFam" id="TF313244"/>
<dbReference type="Reactome" id="R-MMU-3371453">
    <property type="pathway name" value="Regulation of HSF1-mediated heat shock response"/>
</dbReference>
<dbReference type="BioGRID-ORCS" id="70356">
    <property type="hits" value="1 hit in 78 CRISPR screens"/>
</dbReference>
<dbReference type="ChiTaRS" id="St13">
    <property type="organism name" value="mouse"/>
</dbReference>
<dbReference type="PRO" id="PR:Q99L47"/>
<dbReference type="Proteomes" id="UP000000589">
    <property type="component" value="Chromosome 15"/>
</dbReference>
<dbReference type="RNAct" id="Q99L47">
    <property type="molecule type" value="protein"/>
</dbReference>
<dbReference type="Bgee" id="ENSMUSG00000022403">
    <property type="expression patterns" value="Expressed in pineal body and 255 other cell types or tissues"/>
</dbReference>
<dbReference type="ExpressionAtlas" id="Q99L47">
    <property type="expression patterns" value="baseline and differential"/>
</dbReference>
<dbReference type="GO" id="GO:0005829">
    <property type="term" value="C:cytosol"/>
    <property type="evidence" value="ECO:0007669"/>
    <property type="project" value="Ensembl"/>
</dbReference>
<dbReference type="GO" id="GO:0046983">
    <property type="term" value="F:protein dimerization activity"/>
    <property type="evidence" value="ECO:0007669"/>
    <property type="project" value="InterPro"/>
</dbReference>
<dbReference type="GO" id="GO:0009617">
    <property type="term" value="P:response to bacterium"/>
    <property type="evidence" value="ECO:0000270"/>
    <property type="project" value="MGI"/>
</dbReference>
<dbReference type="CDD" id="cd14438">
    <property type="entry name" value="Hip_N"/>
    <property type="match status" value="1"/>
</dbReference>
<dbReference type="FunFam" id="1.10.260.100:FF:000007">
    <property type="entry name" value="hsc70-interacting protein-like isoform X1"/>
    <property type="match status" value="1"/>
</dbReference>
<dbReference type="FunFam" id="1.25.40.10:FF:000080">
    <property type="entry name" value="hsc70-interacting protein-like isoform X1"/>
    <property type="match status" value="1"/>
</dbReference>
<dbReference type="FunFam" id="6.10.250.3420:FF:000001">
    <property type="entry name" value="Hsc70-interacting protein-like protein"/>
    <property type="match status" value="1"/>
</dbReference>
<dbReference type="Gene3D" id="1.10.260.100">
    <property type="match status" value="1"/>
</dbReference>
<dbReference type="Gene3D" id="6.10.250.3420">
    <property type="match status" value="1"/>
</dbReference>
<dbReference type="Gene3D" id="1.25.40.10">
    <property type="entry name" value="Tetratricopeptide repeat domain"/>
    <property type="match status" value="1"/>
</dbReference>
<dbReference type="InterPro" id="IPR034649">
    <property type="entry name" value="Hip_N"/>
</dbReference>
<dbReference type="InterPro" id="IPR041243">
    <property type="entry name" value="STI1/HOP_DP"/>
</dbReference>
<dbReference type="InterPro" id="IPR006636">
    <property type="entry name" value="STI1_HS-bd"/>
</dbReference>
<dbReference type="InterPro" id="IPR011990">
    <property type="entry name" value="TPR-like_helical_dom_sf"/>
</dbReference>
<dbReference type="InterPro" id="IPR019734">
    <property type="entry name" value="TPR_rpt"/>
</dbReference>
<dbReference type="PANTHER" id="PTHR45883">
    <property type="entry name" value="HSC70-INTERACTING PROTEIN"/>
    <property type="match status" value="1"/>
</dbReference>
<dbReference type="PANTHER" id="PTHR45883:SF2">
    <property type="entry name" value="HSC70-INTERACTING PROTEIN"/>
    <property type="match status" value="1"/>
</dbReference>
<dbReference type="Pfam" id="PF18253">
    <property type="entry name" value="HipN"/>
    <property type="match status" value="1"/>
</dbReference>
<dbReference type="Pfam" id="PF17830">
    <property type="entry name" value="STI1-HOP_DP"/>
    <property type="match status" value="1"/>
</dbReference>
<dbReference type="Pfam" id="PF13181">
    <property type="entry name" value="TPR_8"/>
    <property type="match status" value="1"/>
</dbReference>
<dbReference type="SMART" id="SM00727">
    <property type="entry name" value="STI1"/>
    <property type="match status" value="1"/>
</dbReference>
<dbReference type="SMART" id="SM00028">
    <property type="entry name" value="TPR"/>
    <property type="match status" value="3"/>
</dbReference>
<dbReference type="SUPFAM" id="SSF48452">
    <property type="entry name" value="TPR-like"/>
    <property type="match status" value="1"/>
</dbReference>
<dbReference type="PROSITE" id="PS50005">
    <property type="entry name" value="TPR"/>
    <property type="match status" value="3"/>
</dbReference>
<dbReference type="PROSITE" id="PS50293">
    <property type="entry name" value="TPR_REGION"/>
    <property type="match status" value="1"/>
</dbReference>
<gene>
    <name type="primary">St13</name>
    <name type="synonym">Fam10a1</name>
    <name type="synonym">Hip</name>
</gene>
<evidence type="ECO:0000250" key="1"/>
<evidence type="ECO:0000250" key="2">
    <source>
        <dbReference type="UniProtKB" id="P50502"/>
    </source>
</evidence>
<evidence type="ECO:0000256" key="3">
    <source>
        <dbReference type="SAM" id="MobiDB-lite"/>
    </source>
</evidence>
<evidence type="ECO:0000305" key="4"/>
<evidence type="ECO:0007744" key="5">
    <source>
    </source>
</evidence>
<proteinExistence type="evidence at protein level"/>
<protein>
    <recommendedName>
        <fullName>Hsc70-interacting protein</fullName>
        <shortName>Hip</shortName>
    </recommendedName>
    <alternativeName>
        <fullName>Protein FAM10A1</fullName>
    </alternativeName>
    <alternativeName>
        <fullName>Protein ST13 homolog</fullName>
    </alternativeName>
</protein>
<feature type="chain" id="PRO_0000190812" description="Hsc70-interacting protein">
    <location>
        <begin position="1"/>
        <end position="371"/>
    </location>
</feature>
<feature type="repeat" description="TPR 1">
    <location>
        <begin position="113"/>
        <end position="146"/>
    </location>
</feature>
<feature type="repeat" description="TPR 2">
    <location>
        <begin position="147"/>
        <end position="180"/>
    </location>
</feature>
<feature type="repeat" description="TPR 3">
    <location>
        <begin position="181"/>
        <end position="214"/>
    </location>
</feature>
<feature type="domain" description="STI1">
    <location>
        <begin position="321"/>
        <end position="360"/>
    </location>
</feature>
<feature type="region of interest" description="Disordered" evidence="3">
    <location>
        <begin position="38"/>
        <end position="80"/>
    </location>
</feature>
<feature type="region of interest" description="Disordered" evidence="3">
    <location>
        <begin position="255"/>
        <end position="296"/>
    </location>
</feature>
<feature type="compositionally biased region" description="Basic and acidic residues" evidence="3">
    <location>
        <begin position="49"/>
        <end position="72"/>
    </location>
</feature>
<feature type="compositionally biased region" description="Basic and acidic residues" evidence="3">
    <location>
        <begin position="255"/>
        <end position="271"/>
    </location>
</feature>
<feature type="compositionally biased region" description="Gly residues" evidence="3">
    <location>
        <begin position="280"/>
        <end position="296"/>
    </location>
</feature>
<feature type="modified residue" description="Phosphoserine; by GRK5" evidence="2">
    <location>
        <position position="348"/>
    </location>
</feature>
<feature type="modified residue" description="N6-acetyllysine" evidence="5">
    <location>
        <position position="355"/>
    </location>
</feature>
<feature type="modified residue" description="N6-acetyllysine" evidence="5">
    <location>
        <position position="362"/>
    </location>
</feature>
<reference key="1">
    <citation type="submission" date="2005-07" db="EMBL/GenBank/DDBJ databases">
        <title>Cloning of mouse full open reading frames in Gateway(R) system entry vector (pDONR201).</title>
        <authorList>
            <person name="Ebert L."/>
            <person name="Muenstermann E."/>
            <person name="Schatten R."/>
            <person name="Henze S."/>
            <person name="Bohn E."/>
            <person name="Mollenhauer J."/>
            <person name="Wiemann S."/>
            <person name="Schick M."/>
            <person name="Korn B."/>
        </authorList>
    </citation>
    <scope>NUCLEOTIDE SEQUENCE [LARGE SCALE MRNA]</scope>
</reference>
<reference key="2">
    <citation type="journal article" date="2005" name="Science">
        <title>The transcriptional landscape of the mammalian genome.</title>
        <authorList>
            <person name="Carninci P."/>
            <person name="Kasukawa T."/>
            <person name="Katayama S."/>
            <person name="Gough J."/>
            <person name="Frith M.C."/>
            <person name="Maeda N."/>
            <person name="Oyama R."/>
            <person name="Ravasi T."/>
            <person name="Lenhard B."/>
            <person name="Wells C."/>
            <person name="Kodzius R."/>
            <person name="Shimokawa K."/>
            <person name="Bajic V.B."/>
            <person name="Brenner S.E."/>
            <person name="Batalov S."/>
            <person name="Forrest A.R."/>
            <person name="Zavolan M."/>
            <person name="Davis M.J."/>
            <person name="Wilming L.G."/>
            <person name="Aidinis V."/>
            <person name="Allen J.E."/>
            <person name="Ambesi-Impiombato A."/>
            <person name="Apweiler R."/>
            <person name="Aturaliya R.N."/>
            <person name="Bailey T.L."/>
            <person name="Bansal M."/>
            <person name="Baxter L."/>
            <person name="Beisel K.W."/>
            <person name="Bersano T."/>
            <person name="Bono H."/>
            <person name="Chalk A.M."/>
            <person name="Chiu K.P."/>
            <person name="Choudhary V."/>
            <person name="Christoffels A."/>
            <person name="Clutterbuck D.R."/>
            <person name="Crowe M.L."/>
            <person name="Dalla E."/>
            <person name="Dalrymple B.P."/>
            <person name="de Bono B."/>
            <person name="Della Gatta G."/>
            <person name="di Bernardo D."/>
            <person name="Down T."/>
            <person name="Engstrom P."/>
            <person name="Fagiolini M."/>
            <person name="Faulkner G."/>
            <person name="Fletcher C.F."/>
            <person name="Fukushima T."/>
            <person name="Furuno M."/>
            <person name="Futaki S."/>
            <person name="Gariboldi M."/>
            <person name="Georgii-Hemming P."/>
            <person name="Gingeras T.R."/>
            <person name="Gojobori T."/>
            <person name="Green R.E."/>
            <person name="Gustincich S."/>
            <person name="Harbers M."/>
            <person name="Hayashi Y."/>
            <person name="Hensch T.K."/>
            <person name="Hirokawa N."/>
            <person name="Hill D."/>
            <person name="Huminiecki L."/>
            <person name="Iacono M."/>
            <person name="Ikeo K."/>
            <person name="Iwama A."/>
            <person name="Ishikawa T."/>
            <person name="Jakt M."/>
            <person name="Kanapin A."/>
            <person name="Katoh M."/>
            <person name="Kawasawa Y."/>
            <person name="Kelso J."/>
            <person name="Kitamura H."/>
            <person name="Kitano H."/>
            <person name="Kollias G."/>
            <person name="Krishnan S.P."/>
            <person name="Kruger A."/>
            <person name="Kummerfeld S.K."/>
            <person name="Kurochkin I.V."/>
            <person name="Lareau L.F."/>
            <person name="Lazarevic D."/>
            <person name="Lipovich L."/>
            <person name="Liu J."/>
            <person name="Liuni S."/>
            <person name="McWilliam S."/>
            <person name="Madan Babu M."/>
            <person name="Madera M."/>
            <person name="Marchionni L."/>
            <person name="Matsuda H."/>
            <person name="Matsuzawa S."/>
            <person name="Miki H."/>
            <person name="Mignone F."/>
            <person name="Miyake S."/>
            <person name="Morris K."/>
            <person name="Mottagui-Tabar S."/>
            <person name="Mulder N."/>
            <person name="Nakano N."/>
            <person name="Nakauchi H."/>
            <person name="Ng P."/>
            <person name="Nilsson R."/>
            <person name="Nishiguchi S."/>
            <person name="Nishikawa S."/>
            <person name="Nori F."/>
            <person name="Ohara O."/>
            <person name="Okazaki Y."/>
            <person name="Orlando V."/>
            <person name="Pang K.C."/>
            <person name="Pavan W.J."/>
            <person name="Pavesi G."/>
            <person name="Pesole G."/>
            <person name="Petrovsky N."/>
            <person name="Piazza S."/>
            <person name="Reed J."/>
            <person name="Reid J.F."/>
            <person name="Ring B.Z."/>
            <person name="Ringwald M."/>
            <person name="Rost B."/>
            <person name="Ruan Y."/>
            <person name="Salzberg S.L."/>
            <person name="Sandelin A."/>
            <person name="Schneider C."/>
            <person name="Schoenbach C."/>
            <person name="Sekiguchi K."/>
            <person name="Semple C.A."/>
            <person name="Seno S."/>
            <person name="Sessa L."/>
            <person name="Sheng Y."/>
            <person name="Shibata Y."/>
            <person name="Shimada H."/>
            <person name="Shimada K."/>
            <person name="Silva D."/>
            <person name="Sinclair B."/>
            <person name="Sperling S."/>
            <person name="Stupka E."/>
            <person name="Sugiura K."/>
            <person name="Sultana R."/>
            <person name="Takenaka Y."/>
            <person name="Taki K."/>
            <person name="Tammoja K."/>
            <person name="Tan S.L."/>
            <person name="Tang S."/>
            <person name="Taylor M.S."/>
            <person name="Tegner J."/>
            <person name="Teichmann S.A."/>
            <person name="Ueda H.R."/>
            <person name="van Nimwegen E."/>
            <person name="Verardo R."/>
            <person name="Wei C.L."/>
            <person name="Yagi K."/>
            <person name="Yamanishi H."/>
            <person name="Zabarovsky E."/>
            <person name="Zhu S."/>
            <person name="Zimmer A."/>
            <person name="Hide W."/>
            <person name="Bult C."/>
            <person name="Grimmond S.M."/>
            <person name="Teasdale R.D."/>
            <person name="Liu E.T."/>
            <person name="Brusic V."/>
            <person name="Quackenbush J."/>
            <person name="Wahlestedt C."/>
            <person name="Mattick J.S."/>
            <person name="Hume D.A."/>
            <person name="Kai C."/>
            <person name="Sasaki D."/>
            <person name="Tomaru Y."/>
            <person name="Fukuda S."/>
            <person name="Kanamori-Katayama M."/>
            <person name="Suzuki M."/>
            <person name="Aoki J."/>
            <person name="Arakawa T."/>
            <person name="Iida J."/>
            <person name="Imamura K."/>
            <person name="Itoh M."/>
            <person name="Kato T."/>
            <person name="Kawaji H."/>
            <person name="Kawagashira N."/>
            <person name="Kawashima T."/>
            <person name="Kojima M."/>
            <person name="Kondo S."/>
            <person name="Konno H."/>
            <person name="Nakano K."/>
            <person name="Ninomiya N."/>
            <person name="Nishio T."/>
            <person name="Okada M."/>
            <person name="Plessy C."/>
            <person name="Shibata K."/>
            <person name="Shiraki T."/>
            <person name="Suzuki S."/>
            <person name="Tagami M."/>
            <person name="Waki K."/>
            <person name="Watahiki A."/>
            <person name="Okamura-Oho Y."/>
            <person name="Suzuki H."/>
            <person name="Kawai J."/>
            <person name="Hayashizaki Y."/>
        </authorList>
    </citation>
    <scope>NUCLEOTIDE SEQUENCE [LARGE SCALE MRNA]</scope>
</reference>
<reference key="3">
    <citation type="journal article" date="2004" name="Genome Res.">
        <title>The status, quality, and expansion of the NIH full-length cDNA project: the Mammalian Gene Collection (MGC).</title>
        <authorList>
            <consortium name="The MGC Project Team"/>
        </authorList>
    </citation>
    <scope>NUCLEOTIDE SEQUENCE [LARGE SCALE MRNA]</scope>
</reference>
<reference key="4">
    <citation type="journal article" date="2010" name="Cell">
        <title>A tissue-specific atlas of mouse protein phosphorylation and expression.</title>
        <authorList>
            <person name="Huttlin E.L."/>
            <person name="Jedrychowski M.P."/>
            <person name="Elias J.E."/>
            <person name="Goswami T."/>
            <person name="Rad R."/>
            <person name="Beausoleil S.A."/>
            <person name="Villen J."/>
            <person name="Haas W."/>
            <person name="Sowa M.E."/>
            <person name="Gygi S.P."/>
        </authorList>
    </citation>
    <scope>IDENTIFICATION BY MASS SPECTROMETRY [LARGE SCALE ANALYSIS]</scope>
    <source>
        <tissue>Brain</tissue>
        <tissue>Brown adipose tissue</tissue>
        <tissue>Heart</tissue>
        <tissue>Kidney</tissue>
        <tissue>Liver</tissue>
        <tissue>Lung</tissue>
        <tissue>Pancreas</tissue>
        <tissue>Spleen</tissue>
        <tissue>Testis</tissue>
    </source>
</reference>
<reference key="5">
    <citation type="journal article" date="2013" name="Mol. Cell">
        <title>SIRT5-mediated lysine desuccinylation impacts diverse metabolic pathways.</title>
        <authorList>
            <person name="Park J."/>
            <person name="Chen Y."/>
            <person name="Tishkoff D.X."/>
            <person name="Peng C."/>
            <person name="Tan M."/>
            <person name="Dai L."/>
            <person name="Xie Z."/>
            <person name="Zhang Y."/>
            <person name="Zwaans B.M."/>
            <person name="Skinner M.E."/>
            <person name="Lombard D.B."/>
            <person name="Zhao Y."/>
        </authorList>
    </citation>
    <scope>ACETYLATION [LARGE SCALE ANALYSIS] AT LYS-355 AND LYS-362</scope>
    <scope>IDENTIFICATION BY MASS SPECTROMETRY [LARGE SCALE ANALYSIS]</scope>
    <source>
        <tissue>Embryonic fibroblast</tissue>
    </source>
</reference>
<accession>Q99L47</accession>
<accession>Q4FJT4</accession>
<organism>
    <name type="scientific">Mus musculus</name>
    <name type="common">Mouse</name>
    <dbReference type="NCBI Taxonomy" id="10090"/>
    <lineage>
        <taxon>Eukaryota</taxon>
        <taxon>Metazoa</taxon>
        <taxon>Chordata</taxon>
        <taxon>Craniata</taxon>
        <taxon>Vertebrata</taxon>
        <taxon>Euteleostomi</taxon>
        <taxon>Mammalia</taxon>
        <taxon>Eutheria</taxon>
        <taxon>Euarchontoglires</taxon>
        <taxon>Glires</taxon>
        <taxon>Rodentia</taxon>
        <taxon>Myomorpha</taxon>
        <taxon>Muroidea</taxon>
        <taxon>Muridae</taxon>
        <taxon>Murinae</taxon>
        <taxon>Mus</taxon>
        <taxon>Mus</taxon>
    </lineage>
</organism>
<comment type="function">
    <text evidence="1">One HIP oligomer binds the ATPase domains of at least two HSC70 molecules dependent on activation of the HSC70 ATPase by HSP40. Stabilizes the ADP state of HSC70 that has a high affinity for substrate protein. Through its own chaperone activity, it may contribute to the interaction of HSC70 with various target proteins (By similarity).</text>
</comment>
<comment type="subunit">
    <text evidence="1">Homotetramer. Interacts with HSC70 as well as DNAJ homologs and HSP90 (By similarity). Interacts (via the C-terminus 302- 318 AA) with GRK5 (By similarity).</text>
</comment>
<comment type="subcellular location">
    <subcellularLocation>
        <location evidence="1">Cytoplasm</location>
    </subcellularLocation>
</comment>
<comment type="similarity">
    <text evidence="4">Belongs to the FAM10 family.</text>
</comment>
<name>F10A1_MOUSE</name>
<sequence length="371" mass="41656">MDPRKVSELRAFVKMCRQDPSVLHTEEMRFLREWVESMGGKVPPATHKAKSEENTKEEKRDKTTEENIKTEELSSEESDLEIDNEGVIEPDTDAPQEMGDENAEITEEMMDEANEKKGAAIEALNDGELQKAIDLFTDAIKLNPRLAILYAKRASVFVKLQKPNAAIRDCDRAIEINPDSAQPYKWRGKAHRLLGHWEEAAHDLALACKLDYDEDASAMLREVQPRAQKIAEHRRKYERKREEREIKERIERVKKAREEHERAQREEEARRQSGSQYGSFPGGFPGGMPGNFPGGMPGMGGAMPGMAGMAGMPGLNEILSDPEVLAAMQDPEVMVAFQDVAQNPSNMSKYQSNPKVMNLISKLSAKFGGQS</sequence>
<keyword id="KW-0007">Acetylation</keyword>
<keyword id="KW-0143">Chaperone</keyword>
<keyword id="KW-0963">Cytoplasm</keyword>
<keyword id="KW-0597">Phosphoprotein</keyword>
<keyword id="KW-1185">Reference proteome</keyword>
<keyword id="KW-0677">Repeat</keyword>
<keyword id="KW-0802">TPR repeat</keyword>